<organism>
    <name type="scientific">Sinorhizobium sp</name>
    <dbReference type="NCBI Taxonomy" id="42445"/>
    <lineage>
        <taxon>Bacteria</taxon>
        <taxon>Pseudomonadati</taxon>
        <taxon>Pseudomonadota</taxon>
        <taxon>Alphaproteobacteria</taxon>
        <taxon>Hyphomicrobiales</taxon>
        <taxon>Rhizobiaceae</taxon>
        <taxon>Sinorhizobium/Ensifer group</taxon>
        <taxon>Sinorhizobium</taxon>
    </lineage>
</organism>
<reference key="1">
    <citation type="journal article" date="1990" name="J. Bacteriol.">
        <title>Genetic and sequence analysis of an 8.7-kilobase Pseudomonas denitrificans fragment carrying eight genes involved in transformation of precorrin-2 to cobyrinic acid.</title>
        <authorList>
            <person name="Crouzet J."/>
            <person name="Cameron B."/>
            <person name="Cauchois L."/>
            <person name="Rigault S."/>
            <person name="Rouyez M.-C."/>
            <person name="Blanche F."/>
            <person name="Thibaut D."/>
            <person name="Debussche L."/>
        </authorList>
    </citation>
    <scope>NUCLEOTIDE SEQUENCE [GENOMIC DNA]</scope>
    <source>
        <strain>SC510</strain>
    </source>
</reference>
<reference key="2">
    <citation type="journal article" date="1993" name="J. Bacteriol.">
        <title>Biosynthesis of the corrin macrocycle of coenzyme B12 in Pseudomonas denitrificans.</title>
        <authorList>
            <person name="Debussche L."/>
            <person name="Thibaut D."/>
            <person name="Cameron B."/>
            <person name="Crouzet J."/>
            <person name="Blanche F.J."/>
        </authorList>
    </citation>
    <scope>CHARACTERIZATION</scope>
</reference>
<feature type="chain" id="PRO_0000150402" description="Precorrin-3B C(17)-methyltransferase">
    <location>
        <begin position="1"/>
        <end position="254"/>
    </location>
</feature>
<dbReference type="EC" id="2.1.1.131"/>
<dbReference type="EMBL" id="M59301">
    <property type="protein sequence ID" value="AAA25798.1"/>
    <property type="molecule type" value="Genomic_DNA"/>
</dbReference>
<dbReference type="SMR" id="P21640"/>
<dbReference type="KEGG" id="ag:AAA25798"/>
<dbReference type="BioCyc" id="MetaCyc:MONOMER-85"/>
<dbReference type="UniPathway" id="UPA00148">
    <property type="reaction ID" value="UER00214"/>
</dbReference>
<dbReference type="GO" id="GO:0030789">
    <property type="term" value="F:precorrin-3B C17-methyltransferase activity"/>
    <property type="evidence" value="ECO:0007669"/>
    <property type="project" value="UniProtKB-EC"/>
</dbReference>
<dbReference type="GO" id="GO:0009236">
    <property type="term" value="P:cobalamin biosynthetic process"/>
    <property type="evidence" value="ECO:0007669"/>
    <property type="project" value="UniProtKB-UniPathway"/>
</dbReference>
<dbReference type="GO" id="GO:0032259">
    <property type="term" value="P:methylation"/>
    <property type="evidence" value="ECO:0007669"/>
    <property type="project" value="UniProtKB-KW"/>
</dbReference>
<dbReference type="CDD" id="cd11646">
    <property type="entry name" value="Precorrin_3B_C17_MT"/>
    <property type="match status" value="1"/>
</dbReference>
<dbReference type="Gene3D" id="3.40.1010.10">
    <property type="entry name" value="Cobalt-precorrin-4 Transmethylase, Domain 1"/>
    <property type="match status" value="1"/>
</dbReference>
<dbReference type="Gene3D" id="3.30.950.10">
    <property type="entry name" value="Methyltransferase, Cobalt-precorrin-4 Transmethylase, Domain 2"/>
    <property type="match status" value="1"/>
</dbReference>
<dbReference type="InterPro" id="IPR000878">
    <property type="entry name" value="4pyrrol_Mease"/>
</dbReference>
<dbReference type="InterPro" id="IPR035996">
    <property type="entry name" value="4pyrrol_Methylase_sf"/>
</dbReference>
<dbReference type="InterPro" id="IPR014777">
    <property type="entry name" value="4pyrrole_Mease_sub1"/>
</dbReference>
<dbReference type="InterPro" id="IPR014776">
    <property type="entry name" value="4pyrrole_Mease_sub2"/>
</dbReference>
<dbReference type="InterPro" id="IPR006363">
    <property type="entry name" value="Cbl_synth_CobJ/CibH_dom"/>
</dbReference>
<dbReference type="InterPro" id="IPR051810">
    <property type="entry name" value="Precorrin_MeTrfase"/>
</dbReference>
<dbReference type="NCBIfam" id="TIGR01466">
    <property type="entry name" value="cobJ_cbiH"/>
    <property type="match status" value="1"/>
</dbReference>
<dbReference type="NCBIfam" id="NF004648">
    <property type="entry name" value="PRK05991.1"/>
    <property type="match status" value="1"/>
</dbReference>
<dbReference type="PANTHER" id="PTHR47036">
    <property type="entry name" value="COBALT-FACTOR III C(17)-METHYLTRANSFERASE-RELATED"/>
    <property type="match status" value="1"/>
</dbReference>
<dbReference type="PANTHER" id="PTHR47036:SF1">
    <property type="entry name" value="COBALT-FACTOR III C(17)-METHYLTRANSFERASE-RELATED"/>
    <property type="match status" value="1"/>
</dbReference>
<dbReference type="Pfam" id="PF00590">
    <property type="entry name" value="TP_methylase"/>
    <property type="match status" value="1"/>
</dbReference>
<dbReference type="SUPFAM" id="SSF53790">
    <property type="entry name" value="Tetrapyrrole methylase"/>
    <property type="match status" value="1"/>
</dbReference>
<name>COBJ_SINSX</name>
<proteinExistence type="evidence at protein level"/>
<comment type="function">
    <text>Methyltransferase that catalyzes the methylation of C-17 in precorrin-3B to form precorrin-4.</text>
</comment>
<comment type="catalytic activity">
    <reaction>
        <text>precorrin-3B + S-adenosyl-L-methionine = precorrin-4 + S-adenosyl-L-homocysteine + 3 H(+)</text>
        <dbReference type="Rhea" id="RHEA:12761"/>
        <dbReference type="ChEBI" id="CHEBI:15378"/>
        <dbReference type="ChEBI" id="CHEBI:57769"/>
        <dbReference type="ChEBI" id="CHEBI:57856"/>
        <dbReference type="ChEBI" id="CHEBI:59789"/>
        <dbReference type="ChEBI" id="CHEBI:77870"/>
        <dbReference type="EC" id="2.1.1.131"/>
    </reaction>
</comment>
<comment type="pathway">
    <text>Cofactor biosynthesis; adenosylcobalamin biosynthesis; cob(II)yrinate a,c-diamide from precorrin-2 (aerobic route): step 3/10.</text>
</comment>
<comment type="similarity">
    <text evidence="1">Belongs to the precorrin methyltransferase family.</text>
</comment>
<comment type="caution">
    <text evidence="1">Was originally thought to originate from Pseudomonas denitrificans, but similarity searches show that the sequence is much closer to Sinorhizobium. The entry's taxonomy has been changed.</text>
</comment>
<keyword id="KW-0169">Cobalamin biosynthesis</keyword>
<keyword id="KW-0489">Methyltransferase</keyword>
<keyword id="KW-0949">S-adenosyl-L-methionine</keyword>
<keyword id="KW-0808">Transferase</keyword>
<protein>
    <recommendedName>
        <fullName>Precorrin-3B C(17)-methyltransferase</fullName>
        <shortName>Precorrin-3 methylase</shortName>
        <shortName>Precorrin-3 methyltransferase</shortName>
        <ecNumber>2.1.1.131</ecNumber>
    </recommendedName>
</protein>
<sequence length="254" mass="27105">MTGTLYVVGTGPGSAKQMTPETAEAVAAAQEFYGYFPYLDRLNLRPDQIRVASDNREELDRAQVALTRAAAGVKVCMVSGGDPGVFAMAAAVCEAIDKGPAEWKSVELVITPGVTAMLAVAARIGAPLGHDFCAISLSDNLKPWEVITRRLRLAAEAGFVIALYNPISKARPWQLGEAFELLRSVLPASVPVIFGRAAGRPDERIAVMPLGEADANRADMATCVIIGSPETRIVERDGQPDLVYTPRFYAGASQ</sequence>
<gene>
    <name type="primary">cobJ</name>
</gene>
<evidence type="ECO:0000305" key="1"/>
<accession>P21640</accession>